<keyword id="KW-0067">ATP-binding</keyword>
<keyword id="KW-0418">Kinase</keyword>
<keyword id="KW-0545">Nucleotide biosynthesis</keyword>
<keyword id="KW-0547">Nucleotide-binding</keyword>
<keyword id="KW-1185">Reference proteome</keyword>
<keyword id="KW-0808">Transferase</keyword>
<comment type="function">
    <text evidence="1">Phosphorylation of dTMP to form dTDP in both de novo and salvage pathways of dTTP synthesis.</text>
</comment>
<comment type="catalytic activity">
    <reaction evidence="1">
        <text>dTMP + ATP = dTDP + ADP</text>
        <dbReference type="Rhea" id="RHEA:13517"/>
        <dbReference type="ChEBI" id="CHEBI:30616"/>
        <dbReference type="ChEBI" id="CHEBI:58369"/>
        <dbReference type="ChEBI" id="CHEBI:63528"/>
        <dbReference type="ChEBI" id="CHEBI:456216"/>
        <dbReference type="EC" id="2.7.4.9"/>
    </reaction>
</comment>
<comment type="similarity">
    <text evidence="1">Belongs to the thymidylate kinase family.</text>
</comment>
<proteinExistence type="inferred from homology"/>
<sequence>MADAALKRGPGRGRFVTFEGGEGAGKSTQIKMLADRLEKDGVRVVLTREPGGSPGAEIMRHLVLSGMGKLLGAEAETLLFAAARDDHVRNVILPALNQGSWVLCDRFFDSTRAYQGSQGKVAPDVLNAMQRVTIGDLKPDLTLILDVPVEVGLQRASARRGSGAPDRFESEDIKFHKGLRDAFHKIAATEPRRCVLIDATASAEAVSNIVWDAVRERLFTAVAAAS</sequence>
<accession>A4YUL6</accession>
<feature type="chain" id="PRO_1000023153" description="Thymidylate kinase">
    <location>
        <begin position="1"/>
        <end position="226"/>
    </location>
</feature>
<feature type="binding site" evidence="1">
    <location>
        <begin position="20"/>
        <end position="27"/>
    </location>
    <ligand>
        <name>ATP</name>
        <dbReference type="ChEBI" id="CHEBI:30616"/>
    </ligand>
</feature>
<organism>
    <name type="scientific">Bradyrhizobium sp. (strain ORS 278)</name>
    <dbReference type="NCBI Taxonomy" id="114615"/>
    <lineage>
        <taxon>Bacteria</taxon>
        <taxon>Pseudomonadati</taxon>
        <taxon>Pseudomonadota</taxon>
        <taxon>Alphaproteobacteria</taxon>
        <taxon>Hyphomicrobiales</taxon>
        <taxon>Nitrobacteraceae</taxon>
        <taxon>Bradyrhizobium</taxon>
    </lineage>
</organism>
<evidence type="ECO:0000255" key="1">
    <source>
        <dbReference type="HAMAP-Rule" id="MF_00165"/>
    </source>
</evidence>
<dbReference type="EC" id="2.7.4.9" evidence="1"/>
<dbReference type="EMBL" id="CU234118">
    <property type="protein sequence ID" value="CAL77592.1"/>
    <property type="molecule type" value="Genomic_DNA"/>
</dbReference>
<dbReference type="RefSeq" id="WP_011926730.1">
    <property type="nucleotide sequence ID" value="NC_009445.1"/>
</dbReference>
<dbReference type="SMR" id="A4YUL6"/>
<dbReference type="STRING" id="114615.BRADO3827"/>
<dbReference type="KEGG" id="bra:BRADO3827"/>
<dbReference type="eggNOG" id="COG0125">
    <property type="taxonomic scope" value="Bacteria"/>
</dbReference>
<dbReference type="HOGENOM" id="CLU_049131_0_0_5"/>
<dbReference type="OrthoDB" id="9774907at2"/>
<dbReference type="Proteomes" id="UP000001994">
    <property type="component" value="Chromosome"/>
</dbReference>
<dbReference type="GO" id="GO:0005829">
    <property type="term" value="C:cytosol"/>
    <property type="evidence" value="ECO:0007669"/>
    <property type="project" value="TreeGrafter"/>
</dbReference>
<dbReference type="GO" id="GO:0005524">
    <property type="term" value="F:ATP binding"/>
    <property type="evidence" value="ECO:0007669"/>
    <property type="project" value="UniProtKB-UniRule"/>
</dbReference>
<dbReference type="GO" id="GO:0004798">
    <property type="term" value="F:dTMP kinase activity"/>
    <property type="evidence" value="ECO:0007669"/>
    <property type="project" value="UniProtKB-UniRule"/>
</dbReference>
<dbReference type="GO" id="GO:0006233">
    <property type="term" value="P:dTDP biosynthetic process"/>
    <property type="evidence" value="ECO:0007669"/>
    <property type="project" value="InterPro"/>
</dbReference>
<dbReference type="GO" id="GO:0006235">
    <property type="term" value="P:dTTP biosynthetic process"/>
    <property type="evidence" value="ECO:0007669"/>
    <property type="project" value="UniProtKB-UniRule"/>
</dbReference>
<dbReference type="GO" id="GO:0006227">
    <property type="term" value="P:dUDP biosynthetic process"/>
    <property type="evidence" value="ECO:0007669"/>
    <property type="project" value="TreeGrafter"/>
</dbReference>
<dbReference type="CDD" id="cd01672">
    <property type="entry name" value="TMPK"/>
    <property type="match status" value="1"/>
</dbReference>
<dbReference type="FunFam" id="3.40.50.300:FF:000225">
    <property type="entry name" value="Thymidylate kinase"/>
    <property type="match status" value="1"/>
</dbReference>
<dbReference type="Gene3D" id="3.40.50.300">
    <property type="entry name" value="P-loop containing nucleotide triphosphate hydrolases"/>
    <property type="match status" value="1"/>
</dbReference>
<dbReference type="HAMAP" id="MF_00165">
    <property type="entry name" value="Thymidylate_kinase"/>
    <property type="match status" value="1"/>
</dbReference>
<dbReference type="InterPro" id="IPR027417">
    <property type="entry name" value="P-loop_NTPase"/>
</dbReference>
<dbReference type="InterPro" id="IPR039430">
    <property type="entry name" value="Thymidylate_kin-like_dom"/>
</dbReference>
<dbReference type="InterPro" id="IPR018095">
    <property type="entry name" value="Thymidylate_kin_CS"/>
</dbReference>
<dbReference type="InterPro" id="IPR018094">
    <property type="entry name" value="Thymidylate_kinase"/>
</dbReference>
<dbReference type="NCBIfam" id="TIGR00041">
    <property type="entry name" value="DTMP_kinase"/>
    <property type="match status" value="1"/>
</dbReference>
<dbReference type="PANTHER" id="PTHR10344">
    <property type="entry name" value="THYMIDYLATE KINASE"/>
    <property type="match status" value="1"/>
</dbReference>
<dbReference type="PANTHER" id="PTHR10344:SF4">
    <property type="entry name" value="UMP-CMP KINASE 2, MITOCHONDRIAL"/>
    <property type="match status" value="1"/>
</dbReference>
<dbReference type="Pfam" id="PF02223">
    <property type="entry name" value="Thymidylate_kin"/>
    <property type="match status" value="1"/>
</dbReference>
<dbReference type="SUPFAM" id="SSF52540">
    <property type="entry name" value="P-loop containing nucleoside triphosphate hydrolases"/>
    <property type="match status" value="1"/>
</dbReference>
<dbReference type="PROSITE" id="PS01331">
    <property type="entry name" value="THYMIDYLATE_KINASE"/>
    <property type="match status" value="1"/>
</dbReference>
<protein>
    <recommendedName>
        <fullName evidence="1">Thymidylate kinase</fullName>
        <ecNumber evidence="1">2.7.4.9</ecNumber>
    </recommendedName>
    <alternativeName>
        <fullName evidence="1">dTMP kinase</fullName>
    </alternativeName>
</protein>
<gene>
    <name evidence="1" type="primary">tmk</name>
    <name type="ordered locus">BRADO3827</name>
</gene>
<reference key="1">
    <citation type="journal article" date="2007" name="Science">
        <title>Legumes symbioses: absence of nod genes in photosynthetic bradyrhizobia.</title>
        <authorList>
            <person name="Giraud E."/>
            <person name="Moulin L."/>
            <person name="Vallenet D."/>
            <person name="Barbe V."/>
            <person name="Cytryn E."/>
            <person name="Avarre J.-C."/>
            <person name="Jaubert M."/>
            <person name="Simon D."/>
            <person name="Cartieaux F."/>
            <person name="Prin Y."/>
            <person name="Bena G."/>
            <person name="Hannibal L."/>
            <person name="Fardoux J."/>
            <person name="Kojadinovic M."/>
            <person name="Vuillet L."/>
            <person name="Lajus A."/>
            <person name="Cruveiller S."/>
            <person name="Rouy Z."/>
            <person name="Mangenot S."/>
            <person name="Segurens B."/>
            <person name="Dossat C."/>
            <person name="Franck W.L."/>
            <person name="Chang W.-S."/>
            <person name="Saunders E."/>
            <person name="Bruce D."/>
            <person name="Richardson P."/>
            <person name="Normand P."/>
            <person name="Dreyfus B."/>
            <person name="Pignol D."/>
            <person name="Stacey G."/>
            <person name="Emerich D."/>
            <person name="Vermeglio A."/>
            <person name="Medigue C."/>
            <person name="Sadowsky M."/>
        </authorList>
    </citation>
    <scope>NUCLEOTIDE SEQUENCE [LARGE SCALE GENOMIC DNA]</scope>
    <source>
        <strain>ORS 278</strain>
    </source>
</reference>
<name>KTHY_BRASO</name>